<organism>
    <name type="scientific">Carboxydothermus hydrogenoformans (strain ATCC BAA-161 / DSM 6008 / Z-2901)</name>
    <dbReference type="NCBI Taxonomy" id="246194"/>
    <lineage>
        <taxon>Bacteria</taxon>
        <taxon>Bacillati</taxon>
        <taxon>Bacillota</taxon>
        <taxon>Clostridia</taxon>
        <taxon>Thermoanaerobacterales</taxon>
        <taxon>Thermoanaerobacteraceae</taxon>
        <taxon>Carboxydothermus</taxon>
    </lineage>
</organism>
<feature type="chain" id="PRO_0000284181" description="Endoribonuclease YbeY">
    <location>
        <begin position="1"/>
        <end position="143"/>
    </location>
</feature>
<feature type="binding site" evidence="1">
    <location>
        <position position="109"/>
    </location>
    <ligand>
        <name>Zn(2+)</name>
        <dbReference type="ChEBI" id="CHEBI:29105"/>
        <note>catalytic</note>
    </ligand>
</feature>
<feature type="binding site" evidence="1">
    <location>
        <position position="113"/>
    </location>
    <ligand>
        <name>Zn(2+)</name>
        <dbReference type="ChEBI" id="CHEBI:29105"/>
        <note>catalytic</note>
    </ligand>
</feature>
<feature type="binding site" evidence="1">
    <location>
        <position position="119"/>
    </location>
    <ligand>
        <name>Zn(2+)</name>
        <dbReference type="ChEBI" id="CHEBI:29105"/>
        <note>catalytic</note>
    </ligand>
</feature>
<reference key="1">
    <citation type="journal article" date="2005" name="PLoS Genet.">
        <title>Life in hot carbon monoxide: the complete genome sequence of Carboxydothermus hydrogenoformans Z-2901.</title>
        <authorList>
            <person name="Wu M."/>
            <person name="Ren Q."/>
            <person name="Durkin A.S."/>
            <person name="Daugherty S.C."/>
            <person name="Brinkac L.M."/>
            <person name="Dodson R.J."/>
            <person name="Madupu R."/>
            <person name="Sullivan S.A."/>
            <person name="Kolonay J.F."/>
            <person name="Nelson W.C."/>
            <person name="Tallon L.J."/>
            <person name="Jones K.M."/>
            <person name="Ulrich L.E."/>
            <person name="Gonzalez J.M."/>
            <person name="Zhulin I.B."/>
            <person name="Robb F.T."/>
            <person name="Eisen J.A."/>
        </authorList>
    </citation>
    <scope>NUCLEOTIDE SEQUENCE [LARGE SCALE GENOMIC DNA]</scope>
    <source>
        <strain>ATCC BAA-161 / DSM 6008 / Z-2901</strain>
    </source>
</reference>
<dbReference type="EC" id="3.1.-.-" evidence="1"/>
<dbReference type="EMBL" id="CP000141">
    <property type="protein sequence ID" value="ABB14049.1"/>
    <property type="molecule type" value="Genomic_DNA"/>
</dbReference>
<dbReference type="RefSeq" id="WP_011343364.1">
    <property type="nucleotide sequence ID" value="NC_007503.1"/>
</dbReference>
<dbReference type="SMR" id="Q3AEZ6"/>
<dbReference type="FunCoup" id="Q3AEZ6">
    <property type="interactions" value="355"/>
</dbReference>
<dbReference type="STRING" id="246194.CHY_0427"/>
<dbReference type="KEGG" id="chy:CHY_0427"/>
<dbReference type="eggNOG" id="COG0319">
    <property type="taxonomic scope" value="Bacteria"/>
</dbReference>
<dbReference type="HOGENOM" id="CLU_106710_3_0_9"/>
<dbReference type="InParanoid" id="Q3AEZ6"/>
<dbReference type="OrthoDB" id="9807740at2"/>
<dbReference type="Proteomes" id="UP000002706">
    <property type="component" value="Chromosome"/>
</dbReference>
<dbReference type="GO" id="GO:0005737">
    <property type="term" value="C:cytoplasm"/>
    <property type="evidence" value="ECO:0007669"/>
    <property type="project" value="UniProtKB-SubCell"/>
</dbReference>
<dbReference type="GO" id="GO:0004222">
    <property type="term" value="F:metalloendopeptidase activity"/>
    <property type="evidence" value="ECO:0007669"/>
    <property type="project" value="InterPro"/>
</dbReference>
<dbReference type="GO" id="GO:0004521">
    <property type="term" value="F:RNA endonuclease activity"/>
    <property type="evidence" value="ECO:0007669"/>
    <property type="project" value="UniProtKB-UniRule"/>
</dbReference>
<dbReference type="GO" id="GO:0008270">
    <property type="term" value="F:zinc ion binding"/>
    <property type="evidence" value="ECO:0007669"/>
    <property type="project" value="UniProtKB-UniRule"/>
</dbReference>
<dbReference type="GO" id="GO:0006364">
    <property type="term" value="P:rRNA processing"/>
    <property type="evidence" value="ECO:0007669"/>
    <property type="project" value="UniProtKB-UniRule"/>
</dbReference>
<dbReference type="Gene3D" id="3.40.390.30">
    <property type="entry name" value="Metalloproteases ('zincins'), catalytic domain"/>
    <property type="match status" value="1"/>
</dbReference>
<dbReference type="HAMAP" id="MF_00009">
    <property type="entry name" value="Endoribonucl_YbeY"/>
    <property type="match status" value="1"/>
</dbReference>
<dbReference type="InterPro" id="IPR023091">
    <property type="entry name" value="MetalPrtase_cat_dom_sf_prd"/>
</dbReference>
<dbReference type="InterPro" id="IPR002036">
    <property type="entry name" value="YbeY"/>
</dbReference>
<dbReference type="InterPro" id="IPR020549">
    <property type="entry name" value="YbeY_CS"/>
</dbReference>
<dbReference type="NCBIfam" id="TIGR00043">
    <property type="entry name" value="rRNA maturation RNase YbeY"/>
    <property type="match status" value="1"/>
</dbReference>
<dbReference type="PANTHER" id="PTHR46986">
    <property type="entry name" value="ENDORIBONUCLEASE YBEY, CHLOROPLASTIC"/>
    <property type="match status" value="1"/>
</dbReference>
<dbReference type="PANTHER" id="PTHR46986:SF1">
    <property type="entry name" value="ENDORIBONUCLEASE YBEY, CHLOROPLASTIC"/>
    <property type="match status" value="1"/>
</dbReference>
<dbReference type="Pfam" id="PF02130">
    <property type="entry name" value="YbeY"/>
    <property type="match status" value="1"/>
</dbReference>
<dbReference type="SUPFAM" id="SSF55486">
    <property type="entry name" value="Metalloproteases ('zincins'), catalytic domain"/>
    <property type="match status" value="1"/>
</dbReference>
<dbReference type="PROSITE" id="PS01306">
    <property type="entry name" value="UPF0054"/>
    <property type="match status" value="1"/>
</dbReference>
<accession>Q3AEZ6</accession>
<name>YBEY_CARHZ</name>
<proteinExistence type="inferred from homology"/>
<protein>
    <recommendedName>
        <fullName evidence="1">Endoribonuclease YbeY</fullName>
        <ecNumber evidence="1">3.1.-.-</ecNumber>
    </recommendedName>
</protein>
<keyword id="KW-0963">Cytoplasm</keyword>
<keyword id="KW-0255">Endonuclease</keyword>
<keyword id="KW-0378">Hydrolase</keyword>
<keyword id="KW-0479">Metal-binding</keyword>
<keyword id="KW-0540">Nuclease</keyword>
<keyword id="KW-1185">Reference proteome</keyword>
<keyword id="KW-0690">Ribosome biogenesis</keyword>
<keyword id="KW-0698">rRNA processing</keyword>
<keyword id="KW-0862">Zinc</keyword>
<evidence type="ECO:0000255" key="1">
    <source>
        <dbReference type="HAMAP-Rule" id="MF_00009"/>
    </source>
</evidence>
<comment type="function">
    <text evidence="1">Single strand-specific metallo-endoribonuclease involved in late-stage 70S ribosome quality control and in maturation of the 3' terminus of the 16S rRNA.</text>
</comment>
<comment type="cofactor">
    <cofactor evidence="1">
        <name>Zn(2+)</name>
        <dbReference type="ChEBI" id="CHEBI:29105"/>
    </cofactor>
    <text evidence="1">Binds 1 zinc ion.</text>
</comment>
<comment type="subcellular location">
    <subcellularLocation>
        <location evidence="1">Cytoplasm</location>
    </subcellularLocation>
</comment>
<comment type="similarity">
    <text evidence="1">Belongs to the endoribonuclease YbeY family.</text>
</comment>
<gene>
    <name evidence="1" type="primary">ybeY</name>
    <name type="ordered locus">CHY_0427</name>
</gene>
<sequence>MTEITNLQDKVDVDETLLNIITQAVSLTLNEEGRAGVVSIALVDNNYIQSLNREYRQKDVPTDVLSFPLADDKDDEVLGDVVISLEKAAEQAKEYGHSFFREVAFLTVHGVLHLLGHDHYEEEETRIMREKEEKILSALGLER</sequence>